<geneLocation type="chloroplast"/>
<evidence type="ECO:0000255" key="1">
    <source>
        <dbReference type="HAMAP-Rule" id="MF_01370"/>
    </source>
</evidence>
<name>PSB28_CYACA</name>
<gene>
    <name evidence="1" type="primary">psb28</name>
    <name evidence="1" type="synonym">psbW</name>
</gene>
<proteinExistence type="inferred from homology"/>
<organism>
    <name type="scientific">Cyanidium caldarium</name>
    <name type="common">Red alga</name>
    <dbReference type="NCBI Taxonomy" id="2771"/>
    <lineage>
        <taxon>Eukaryota</taxon>
        <taxon>Rhodophyta</taxon>
        <taxon>Bangiophyceae</taxon>
        <taxon>Cyanidiales</taxon>
        <taxon>Cyanidiaceae</taxon>
        <taxon>Cyanidium</taxon>
    </lineage>
</organism>
<comment type="subunit">
    <text evidence="1">Part of the photosystem II complex.</text>
</comment>
<comment type="subcellular location">
    <subcellularLocation>
        <location evidence="1">Plastid</location>
        <location evidence="1">Chloroplast thylakoid membrane</location>
        <topology evidence="1">Peripheral membrane protein</topology>
        <orientation evidence="1">Stromal side</orientation>
    </subcellularLocation>
</comment>
<comment type="similarity">
    <text evidence="1">Belongs to the Psb28 family.</text>
</comment>
<accession>Q9TLZ2</accession>
<protein>
    <recommendedName>
        <fullName evidence="1">Photosystem II reaction center Psb28 protein</fullName>
    </recommendedName>
    <alternativeName>
        <fullName evidence="1">Photosystem II 13 kDa protein</fullName>
    </alternativeName>
    <alternativeName>
        <fullName evidence="1">Photosystem II reaction center W protein</fullName>
    </alternativeName>
</protein>
<dbReference type="EMBL" id="AF022186">
    <property type="protein sequence ID" value="AAF12969.1"/>
    <property type="molecule type" value="Genomic_DNA"/>
</dbReference>
<dbReference type="RefSeq" id="NP_045125.1">
    <property type="nucleotide sequence ID" value="NC_001840.1"/>
</dbReference>
<dbReference type="SMR" id="Q9TLZ2"/>
<dbReference type="GeneID" id="800276"/>
<dbReference type="GO" id="GO:0009535">
    <property type="term" value="C:chloroplast thylakoid membrane"/>
    <property type="evidence" value="ECO:0007669"/>
    <property type="project" value="UniProtKB-SubCell"/>
</dbReference>
<dbReference type="GO" id="GO:0009523">
    <property type="term" value="C:photosystem II"/>
    <property type="evidence" value="ECO:0007669"/>
    <property type="project" value="UniProtKB-KW"/>
</dbReference>
<dbReference type="GO" id="GO:0015979">
    <property type="term" value="P:photosynthesis"/>
    <property type="evidence" value="ECO:0007669"/>
    <property type="project" value="UniProtKB-UniRule"/>
</dbReference>
<dbReference type="Gene3D" id="2.40.30.220">
    <property type="entry name" value="Photosystem II Psb28"/>
    <property type="match status" value="1"/>
</dbReference>
<dbReference type="HAMAP" id="MF_01370">
    <property type="entry name" value="PSII_Psb28"/>
    <property type="match status" value="1"/>
</dbReference>
<dbReference type="InterPro" id="IPR038676">
    <property type="entry name" value="Psb28_c1_sf"/>
</dbReference>
<dbReference type="InterPro" id="IPR005610">
    <property type="entry name" value="PSII_Psb28_class-1"/>
</dbReference>
<dbReference type="NCBIfam" id="TIGR03047">
    <property type="entry name" value="PS_II_psb28"/>
    <property type="match status" value="1"/>
</dbReference>
<dbReference type="PANTHER" id="PTHR34963">
    <property type="match status" value="1"/>
</dbReference>
<dbReference type="PANTHER" id="PTHR34963:SF2">
    <property type="entry name" value="PHOTOSYSTEM II REACTION CENTER PSB28 PROTEIN, CHLOROPLASTIC"/>
    <property type="match status" value="1"/>
</dbReference>
<dbReference type="Pfam" id="PF03912">
    <property type="entry name" value="Psb28"/>
    <property type="match status" value="1"/>
</dbReference>
<keyword id="KW-0150">Chloroplast</keyword>
<keyword id="KW-0472">Membrane</keyword>
<keyword id="KW-0602">Photosynthesis</keyword>
<keyword id="KW-0604">Photosystem II</keyword>
<keyword id="KW-0934">Plastid</keyword>
<keyword id="KW-0793">Thylakoid</keyword>
<sequence>MAKIQFIKGIDEQTVPEIRLTRSRDGNTGTAIFSFINPTVFLLHSSSQNYGEITGMYLQDDEGELSTRNVTANFVNGKPKAVEAVYLIRNKSGWDRLMRFINKYAEDKNMSFYKS</sequence>
<feature type="chain" id="PRO_0000217281" description="Photosystem II reaction center Psb28 protein">
    <location>
        <begin position="1"/>
        <end position="115"/>
    </location>
</feature>
<reference key="1">
    <citation type="journal article" date="2000" name="J. Mol. Evol.">
        <title>The structure and gene repertoire of an ancient red algal plastid genome.</title>
        <authorList>
            <person name="Gloeckner G."/>
            <person name="Rosenthal A."/>
            <person name="Valentin K.-U."/>
        </authorList>
    </citation>
    <scope>NUCLEOTIDE SEQUENCE [LARGE SCALE GENOMIC DNA]</scope>
    <source>
        <strain>RK-1</strain>
    </source>
</reference>